<comment type="function">
    <text evidence="1 2 3">Transcription regulator involved in inner cell mass and embryonic stem (ES) cells proliferation and self-renewal. Imposes pluripotency on ES cells and prevents their differentiation towards extraembryonic endoderm and trophectoderm lineages. Blocks bone morphogenetic protein-induced mesoderm differentiation of ES cells by physically interacting with SMAD1 and interfering with the recruitment of coactivators to the active SMAD transcriptional complexes. Acts as a transcriptional activator or repressor. Binds optimally to the DNA consensus sequence 5'-TAAT[GT][GT]-3' or 5'-[CG][GA][CG]C[GC]ATTAN[GC]-3'. Binds to the POU5F1/OCT4 promoter. Able to autorepress its expression in differentiating (ES) cells: binds to its own promoter following interaction with ZNF281/ZFP281, leading to recruitment of the NuRD complex and subsequent repression of expression. When overexpressed, promotes cells to enter into S phase and proliferation (By similarity).</text>
</comment>
<comment type="subunit">
    <text evidence="2 3">Interacts with SMAD1. Interacts with SALL4. Interacts with ZNF281/ZFP281 (By similarity). Interacts with PCGF1 (By similarity). Interacts with ESRRB; reciprocally modulates their transcriptional activities. Interacts with NSD2 (By similarity).</text>
</comment>
<comment type="subcellular location">
    <subcellularLocation>
        <location evidence="4">Nucleus</location>
    </subcellularLocation>
</comment>
<comment type="miscellaneous">
    <text>Exists an other tandem duplicated non-processed pseudogene (NANOGP1) and 9 other NANOG-related nucleotide sequences located on different chromosomes, all of which are processed pseudogenes lacking introns (NANOGP1 to NANOGP11); except NANOGP8 which is absent from the chimpanzee genome.</text>
</comment>
<comment type="similarity">
    <text evidence="6">Belongs to the Nanog homeobox family.</text>
</comment>
<keyword id="KW-0010">Activator</keyword>
<keyword id="KW-0217">Developmental protein</keyword>
<keyword id="KW-0238">DNA-binding</keyword>
<keyword id="KW-0371">Homeobox</keyword>
<keyword id="KW-0539">Nucleus</keyword>
<keyword id="KW-1185">Reference proteome</keyword>
<keyword id="KW-0677">Repeat</keyword>
<keyword id="KW-0678">Repressor</keyword>
<keyword id="KW-0804">Transcription</keyword>
<keyword id="KW-0805">Transcription regulation</keyword>
<organism>
    <name type="scientific">Pan troglodytes</name>
    <name type="common">Chimpanzee</name>
    <dbReference type="NCBI Taxonomy" id="9598"/>
    <lineage>
        <taxon>Eukaryota</taxon>
        <taxon>Metazoa</taxon>
        <taxon>Chordata</taxon>
        <taxon>Craniata</taxon>
        <taxon>Vertebrata</taxon>
        <taxon>Euteleostomi</taxon>
        <taxon>Mammalia</taxon>
        <taxon>Eutheria</taxon>
        <taxon>Euarchontoglires</taxon>
        <taxon>Primates</taxon>
        <taxon>Haplorrhini</taxon>
        <taxon>Catarrhini</taxon>
        <taxon>Hominidae</taxon>
        <taxon>Pan</taxon>
    </lineage>
</organism>
<gene>
    <name type="primary">NANOG</name>
</gene>
<sequence>MSVDPACPQSLPCFEASDCKESSPMPVICGPEENYPSLQMSSAEMPHTETVSPLPSSMDLLIQDSPDSSTSPKGKQPTSAENSVTKKEDKVPVKKQKTRTVFSSTQLCVLNDRFQRQKYLSLQQMQELSNILNLSYKQVKTWFQNQRMKSKRWQKNNWPKNSNGVTQKASAPTYPSLYSSYHQGCLVNPTGNLPMWSNQTWNNSTWSNQTQNIQSWSNHSWNTQTWCTQSWNNQAWNSPFYNCGEESLQSCMQFQPNSPASDLEAALEAAGEGLNVIQQTARYFSTPQTMDLFLNYSTNMQPEDM</sequence>
<accession>Q3LTE0</accession>
<proteinExistence type="inferred from homology"/>
<dbReference type="EMBL" id="DQ179631">
    <property type="protein sequence ID" value="ABA27089.1"/>
    <property type="molecule type" value="Genomic_DNA"/>
</dbReference>
<dbReference type="RefSeq" id="NP_001065295.1">
    <property type="nucleotide sequence ID" value="NM_001071827.1"/>
</dbReference>
<dbReference type="BMRB" id="Q3LTE0"/>
<dbReference type="SMR" id="Q3LTE0"/>
<dbReference type="FunCoup" id="Q3LTE0">
    <property type="interactions" value="583"/>
</dbReference>
<dbReference type="STRING" id="9598.ENSPTRP00000007892"/>
<dbReference type="PaxDb" id="9598-ENSPTRP00000007892"/>
<dbReference type="Ensembl" id="ENSPTRT00000008541.3">
    <property type="protein sequence ID" value="ENSPTRP00000007892.2"/>
    <property type="gene ID" value="ENSPTRG00000029807.2"/>
</dbReference>
<dbReference type="GeneID" id="748301"/>
<dbReference type="KEGG" id="ptr:748301"/>
<dbReference type="CTD" id="79923"/>
<dbReference type="eggNOG" id="KOG0491">
    <property type="taxonomic scope" value="Eukaryota"/>
</dbReference>
<dbReference type="GeneTree" id="ENSGT00670000098076"/>
<dbReference type="HOGENOM" id="CLU_086240_0_0_1"/>
<dbReference type="InParanoid" id="Q3LTE0"/>
<dbReference type="OMA" id="AWSNHSW"/>
<dbReference type="OrthoDB" id="12715at9604"/>
<dbReference type="TreeFam" id="TF337402"/>
<dbReference type="Proteomes" id="UP000002277">
    <property type="component" value="Chromosome 12"/>
</dbReference>
<dbReference type="Bgee" id="ENSPTRG00000029807">
    <property type="expression patterns" value="Expressed in cerebellar cortex and 3 other cell types or tissues"/>
</dbReference>
<dbReference type="GO" id="GO:0005634">
    <property type="term" value="C:nucleus"/>
    <property type="evidence" value="ECO:0007669"/>
    <property type="project" value="UniProtKB-SubCell"/>
</dbReference>
<dbReference type="GO" id="GO:0003700">
    <property type="term" value="F:DNA-binding transcription factor activity"/>
    <property type="evidence" value="ECO:0000250"/>
    <property type="project" value="UniProtKB"/>
</dbReference>
<dbReference type="GO" id="GO:0000981">
    <property type="term" value="F:DNA-binding transcription factor activity, RNA polymerase II-specific"/>
    <property type="evidence" value="ECO:0000318"/>
    <property type="project" value="GO_Central"/>
</dbReference>
<dbReference type="GO" id="GO:0001227">
    <property type="term" value="F:DNA-binding transcription repressor activity, RNA polymerase II-specific"/>
    <property type="evidence" value="ECO:0000250"/>
    <property type="project" value="UniProtKB"/>
</dbReference>
<dbReference type="GO" id="GO:0000978">
    <property type="term" value="F:RNA polymerase II cis-regulatory region sequence-specific DNA binding"/>
    <property type="evidence" value="ECO:0000318"/>
    <property type="project" value="GO_Central"/>
</dbReference>
<dbReference type="GO" id="GO:0000976">
    <property type="term" value="F:transcription cis-regulatory region binding"/>
    <property type="evidence" value="ECO:0000250"/>
    <property type="project" value="UniProtKB"/>
</dbReference>
<dbReference type="GO" id="GO:0030154">
    <property type="term" value="P:cell differentiation"/>
    <property type="evidence" value="ECO:0000318"/>
    <property type="project" value="GO_Central"/>
</dbReference>
<dbReference type="GO" id="GO:0006357">
    <property type="term" value="P:regulation of transcription by RNA polymerase II"/>
    <property type="evidence" value="ECO:0000318"/>
    <property type="project" value="GO_Central"/>
</dbReference>
<dbReference type="GO" id="GO:0019827">
    <property type="term" value="P:stem cell population maintenance"/>
    <property type="evidence" value="ECO:0000250"/>
    <property type="project" value="UniProtKB"/>
</dbReference>
<dbReference type="CDD" id="cd00086">
    <property type="entry name" value="homeodomain"/>
    <property type="match status" value="1"/>
</dbReference>
<dbReference type="FunFam" id="1.10.10.60:FF:000203">
    <property type="entry name" value="Nanog homeobox transcription factor"/>
    <property type="match status" value="1"/>
</dbReference>
<dbReference type="Gene3D" id="1.10.10.60">
    <property type="entry name" value="Homeodomain-like"/>
    <property type="match status" value="1"/>
</dbReference>
<dbReference type="InterPro" id="IPR050460">
    <property type="entry name" value="Distal-less_Homeobox_TF"/>
</dbReference>
<dbReference type="InterPro" id="IPR001356">
    <property type="entry name" value="HD"/>
</dbReference>
<dbReference type="InterPro" id="IPR017970">
    <property type="entry name" value="Homeobox_CS"/>
</dbReference>
<dbReference type="InterPro" id="IPR009057">
    <property type="entry name" value="Homeodomain-like_sf"/>
</dbReference>
<dbReference type="PANTHER" id="PTHR24327">
    <property type="entry name" value="HOMEOBOX PROTEIN"/>
    <property type="match status" value="1"/>
</dbReference>
<dbReference type="PANTHER" id="PTHR24327:SF79">
    <property type="entry name" value="HOMEOBOX PROTEIN NANOG-RELATED"/>
    <property type="match status" value="1"/>
</dbReference>
<dbReference type="Pfam" id="PF00046">
    <property type="entry name" value="Homeodomain"/>
    <property type="match status" value="1"/>
</dbReference>
<dbReference type="SMART" id="SM00389">
    <property type="entry name" value="HOX"/>
    <property type="match status" value="1"/>
</dbReference>
<dbReference type="SUPFAM" id="SSF46689">
    <property type="entry name" value="Homeodomain-like"/>
    <property type="match status" value="1"/>
</dbReference>
<dbReference type="PROSITE" id="PS00027">
    <property type="entry name" value="HOMEOBOX_1"/>
    <property type="match status" value="1"/>
</dbReference>
<dbReference type="PROSITE" id="PS50071">
    <property type="entry name" value="HOMEOBOX_2"/>
    <property type="match status" value="1"/>
</dbReference>
<feature type="chain" id="PRO_0000261422" description="Homeobox protein NANOG">
    <location>
        <begin position="1"/>
        <end position="305"/>
    </location>
</feature>
<feature type="repeat" description="1">
    <location>
        <begin position="196"/>
        <end position="200"/>
    </location>
</feature>
<feature type="repeat" description="2">
    <location>
        <begin position="201"/>
        <end position="205"/>
    </location>
</feature>
<feature type="repeat" description="3">
    <location>
        <begin position="206"/>
        <end position="210"/>
    </location>
</feature>
<feature type="repeat" description="4">
    <location>
        <begin position="216"/>
        <end position="220"/>
    </location>
</feature>
<feature type="repeat" description="5">
    <location>
        <begin position="221"/>
        <end position="225"/>
    </location>
</feature>
<feature type="repeat" description="6">
    <location>
        <begin position="226"/>
        <end position="230"/>
    </location>
</feature>
<feature type="repeat" description="7">
    <location>
        <begin position="231"/>
        <end position="235"/>
    </location>
</feature>
<feature type="repeat" description="8">
    <location>
        <begin position="236"/>
        <end position="240"/>
    </location>
</feature>
<feature type="region of interest" description="Disordered" evidence="5">
    <location>
        <begin position="1"/>
        <end position="96"/>
    </location>
</feature>
<feature type="region of interest" description="Required for DNA-binding" evidence="3">
    <location>
        <begin position="122"/>
        <end position="151"/>
    </location>
</feature>
<feature type="region of interest" description="8 X repeats starting with a Trp in each unit">
    <location>
        <begin position="196"/>
        <end position="240"/>
    </location>
</feature>
<feature type="region of interest" description="Sufficient for transactivation activity" evidence="1">
    <location>
        <begin position="196"/>
        <end position="240"/>
    </location>
</feature>
<feature type="region of interest" description="Sufficient for strong transactivation activity" evidence="1">
    <location>
        <begin position="241"/>
        <end position="305"/>
    </location>
</feature>
<feature type="compositionally biased region" description="Polar residues" evidence="5">
    <location>
        <begin position="65"/>
        <end position="83"/>
    </location>
</feature>
<reference key="1">
    <citation type="journal article" date="2006" name="BMC Evol. Biol.">
        <title>Evolution of the NANOG pseudogene family in the human and chimpanzee genomes.</title>
        <authorList>
            <person name="Fairbanks D.J."/>
            <person name="Maughan P.J."/>
        </authorList>
    </citation>
    <scope>NUCLEOTIDE SEQUENCE [GENOMIC DNA]</scope>
    <scope>GENE FAMILY</scope>
</reference>
<evidence type="ECO:0000250" key="1"/>
<evidence type="ECO:0000250" key="2">
    <source>
        <dbReference type="UniProtKB" id="Q80Z64"/>
    </source>
</evidence>
<evidence type="ECO:0000250" key="3">
    <source>
        <dbReference type="UniProtKB" id="Q9H9S0"/>
    </source>
</evidence>
<evidence type="ECO:0000255" key="4">
    <source>
        <dbReference type="PROSITE-ProRule" id="PRU00108"/>
    </source>
</evidence>
<evidence type="ECO:0000256" key="5">
    <source>
        <dbReference type="SAM" id="MobiDB-lite"/>
    </source>
</evidence>
<evidence type="ECO:0000305" key="6"/>
<name>NANOG_PANTR</name>
<protein>
    <recommendedName>
        <fullName>Homeobox protein NANOG</fullName>
    </recommendedName>
    <alternativeName>
        <fullName>Homeobox transcription factor Nanog</fullName>
    </alternativeName>
</protein>